<name>DUT_ANADF</name>
<keyword id="KW-0378">Hydrolase</keyword>
<keyword id="KW-0460">Magnesium</keyword>
<keyword id="KW-0479">Metal-binding</keyword>
<keyword id="KW-0546">Nucleotide metabolism</keyword>
<keyword id="KW-1185">Reference proteome</keyword>
<accession>A7H9F9</accession>
<dbReference type="EC" id="3.6.1.23" evidence="1"/>
<dbReference type="EMBL" id="CP000769">
    <property type="protein sequence ID" value="ABS25355.1"/>
    <property type="molecule type" value="Genomic_DNA"/>
</dbReference>
<dbReference type="RefSeq" id="WP_011985461.1">
    <property type="nucleotide sequence ID" value="NC_009675.1"/>
</dbReference>
<dbReference type="SMR" id="A7H9F9"/>
<dbReference type="STRING" id="404589.Anae109_1147"/>
<dbReference type="KEGG" id="afw:Anae109_1147"/>
<dbReference type="eggNOG" id="COG0756">
    <property type="taxonomic scope" value="Bacteria"/>
</dbReference>
<dbReference type="HOGENOM" id="CLU_068508_1_2_7"/>
<dbReference type="OrthoDB" id="9809956at2"/>
<dbReference type="UniPathway" id="UPA00610">
    <property type="reaction ID" value="UER00666"/>
</dbReference>
<dbReference type="Proteomes" id="UP000006382">
    <property type="component" value="Chromosome"/>
</dbReference>
<dbReference type="GO" id="GO:0004170">
    <property type="term" value="F:dUTP diphosphatase activity"/>
    <property type="evidence" value="ECO:0007669"/>
    <property type="project" value="UniProtKB-UniRule"/>
</dbReference>
<dbReference type="GO" id="GO:0000287">
    <property type="term" value="F:magnesium ion binding"/>
    <property type="evidence" value="ECO:0007669"/>
    <property type="project" value="UniProtKB-UniRule"/>
</dbReference>
<dbReference type="GO" id="GO:0006226">
    <property type="term" value="P:dUMP biosynthetic process"/>
    <property type="evidence" value="ECO:0007669"/>
    <property type="project" value="UniProtKB-UniRule"/>
</dbReference>
<dbReference type="GO" id="GO:0046081">
    <property type="term" value="P:dUTP catabolic process"/>
    <property type="evidence" value="ECO:0007669"/>
    <property type="project" value="InterPro"/>
</dbReference>
<dbReference type="CDD" id="cd07557">
    <property type="entry name" value="trimeric_dUTPase"/>
    <property type="match status" value="1"/>
</dbReference>
<dbReference type="Gene3D" id="2.70.40.10">
    <property type="match status" value="1"/>
</dbReference>
<dbReference type="HAMAP" id="MF_00116">
    <property type="entry name" value="dUTPase_bact"/>
    <property type="match status" value="1"/>
</dbReference>
<dbReference type="InterPro" id="IPR008181">
    <property type="entry name" value="dUTPase"/>
</dbReference>
<dbReference type="InterPro" id="IPR029054">
    <property type="entry name" value="dUTPase-like"/>
</dbReference>
<dbReference type="InterPro" id="IPR036157">
    <property type="entry name" value="dUTPase-like_sf"/>
</dbReference>
<dbReference type="InterPro" id="IPR033704">
    <property type="entry name" value="dUTPase_trimeric"/>
</dbReference>
<dbReference type="NCBIfam" id="TIGR00576">
    <property type="entry name" value="dut"/>
    <property type="match status" value="1"/>
</dbReference>
<dbReference type="NCBIfam" id="NF001862">
    <property type="entry name" value="PRK00601.1"/>
    <property type="match status" value="1"/>
</dbReference>
<dbReference type="PANTHER" id="PTHR11241">
    <property type="entry name" value="DEOXYURIDINE 5'-TRIPHOSPHATE NUCLEOTIDOHYDROLASE"/>
    <property type="match status" value="1"/>
</dbReference>
<dbReference type="PANTHER" id="PTHR11241:SF0">
    <property type="entry name" value="DEOXYURIDINE 5'-TRIPHOSPHATE NUCLEOTIDOHYDROLASE"/>
    <property type="match status" value="1"/>
</dbReference>
<dbReference type="Pfam" id="PF00692">
    <property type="entry name" value="dUTPase"/>
    <property type="match status" value="1"/>
</dbReference>
<dbReference type="SUPFAM" id="SSF51283">
    <property type="entry name" value="dUTPase-like"/>
    <property type="match status" value="1"/>
</dbReference>
<sequence length="147" mass="15325">MPVTVKVRRVGQRGPPLELPRYETDGAAGLDLRADEPVTLAPGERRLVPTGLALEIPPGHEGQVRPRSGLAVRHGVGMVNAPGTIDSDYRGEVGVVLVNHGQEPVTFARGDRIAQLVIGPVVRAELALVEDLASSGRGGGGFGSTGR</sequence>
<feature type="chain" id="PRO_1000015442" description="Deoxyuridine 5'-triphosphate nucleotidohydrolase">
    <location>
        <begin position="1"/>
        <end position="147"/>
    </location>
</feature>
<feature type="binding site" evidence="1">
    <location>
        <begin position="67"/>
        <end position="69"/>
    </location>
    <ligand>
        <name>substrate</name>
    </ligand>
</feature>
<feature type="binding site" evidence="1">
    <location>
        <position position="80"/>
    </location>
    <ligand>
        <name>substrate</name>
    </ligand>
</feature>
<feature type="binding site" evidence="1">
    <location>
        <begin position="84"/>
        <end position="86"/>
    </location>
    <ligand>
        <name>substrate</name>
    </ligand>
</feature>
<reference key="1">
    <citation type="journal article" date="2015" name="Genome Announc.">
        <title>Complete genome sequence of Anaeromyxobacter sp. Fw109-5, an anaerobic, metal-reducing bacterium isolated from a contaminated subsurface environment.</title>
        <authorList>
            <person name="Hwang C."/>
            <person name="Copeland A."/>
            <person name="Lucas S."/>
            <person name="Lapidus A."/>
            <person name="Barry K."/>
            <person name="Glavina Del Rio T."/>
            <person name="Dalin E."/>
            <person name="Tice H."/>
            <person name="Pitluck S."/>
            <person name="Sims D."/>
            <person name="Brettin T."/>
            <person name="Bruce D.C."/>
            <person name="Detter J.C."/>
            <person name="Han C.S."/>
            <person name="Schmutz J."/>
            <person name="Larimer F.W."/>
            <person name="Land M.L."/>
            <person name="Hauser L.J."/>
            <person name="Kyrpides N."/>
            <person name="Lykidis A."/>
            <person name="Richardson P."/>
            <person name="Belieav A."/>
            <person name="Sanford R.A."/>
            <person name="Loeffler F.E."/>
            <person name="Fields M.W."/>
        </authorList>
    </citation>
    <scope>NUCLEOTIDE SEQUENCE [LARGE SCALE GENOMIC DNA]</scope>
    <source>
        <strain>Fw109-5</strain>
    </source>
</reference>
<comment type="function">
    <text evidence="1">This enzyme is involved in nucleotide metabolism: it produces dUMP, the immediate precursor of thymidine nucleotides and it decreases the intracellular concentration of dUTP so that uracil cannot be incorporated into DNA.</text>
</comment>
<comment type="catalytic activity">
    <reaction evidence="1">
        <text>dUTP + H2O = dUMP + diphosphate + H(+)</text>
        <dbReference type="Rhea" id="RHEA:10248"/>
        <dbReference type="ChEBI" id="CHEBI:15377"/>
        <dbReference type="ChEBI" id="CHEBI:15378"/>
        <dbReference type="ChEBI" id="CHEBI:33019"/>
        <dbReference type="ChEBI" id="CHEBI:61555"/>
        <dbReference type="ChEBI" id="CHEBI:246422"/>
        <dbReference type="EC" id="3.6.1.23"/>
    </reaction>
</comment>
<comment type="cofactor">
    <cofactor evidence="1">
        <name>Mg(2+)</name>
        <dbReference type="ChEBI" id="CHEBI:18420"/>
    </cofactor>
</comment>
<comment type="pathway">
    <text evidence="1">Pyrimidine metabolism; dUMP biosynthesis; dUMP from dCTP (dUTP route): step 2/2.</text>
</comment>
<comment type="similarity">
    <text evidence="1">Belongs to the dUTPase family.</text>
</comment>
<organism>
    <name type="scientific">Anaeromyxobacter sp. (strain Fw109-5)</name>
    <dbReference type="NCBI Taxonomy" id="404589"/>
    <lineage>
        <taxon>Bacteria</taxon>
        <taxon>Pseudomonadati</taxon>
        <taxon>Myxococcota</taxon>
        <taxon>Myxococcia</taxon>
        <taxon>Myxococcales</taxon>
        <taxon>Cystobacterineae</taxon>
        <taxon>Anaeromyxobacteraceae</taxon>
        <taxon>Anaeromyxobacter</taxon>
    </lineage>
</organism>
<gene>
    <name evidence="1" type="primary">dut</name>
    <name type="ordered locus">Anae109_1147</name>
</gene>
<protein>
    <recommendedName>
        <fullName evidence="1">Deoxyuridine 5'-triphosphate nucleotidohydrolase</fullName>
        <shortName evidence="1">dUTPase</shortName>
        <ecNumber evidence="1">3.6.1.23</ecNumber>
    </recommendedName>
    <alternativeName>
        <fullName evidence="1">dUTP pyrophosphatase</fullName>
    </alternativeName>
</protein>
<proteinExistence type="inferred from homology"/>
<evidence type="ECO:0000255" key="1">
    <source>
        <dbReference type="HAMAP-Rule" id="MF_00116"/>
    </source>
</evidence>